<proteinExistence type="evidence at transcript level"/>
<gene>
    <name type="ORF">CG2811</name>
</gene>
<name>YS11_DROME</name>
<dbReference type="EC" id="2.3.2.-"/>
<dbReference type="EMBL" id="AE013599">
    <property type="protein sequence ID" value="AAF47297.2"/>
    <property type="molecule type" value="Genomic_DNA"/>
</dbReference>
<dbReference type="EMBL" id="AY071623">
    <property type="protein sequence ID" value="AAL49245.1"/>
    <property type="molecule type" value="mRNA"/>
</dbReference>
<dbReference type="RefSeq" id="NP_611982.2">
    <property type="nucleotide sequence ID" value="NM_138138.5"/>
</dbReference>
<dbReference type="SMR" id="Q9W0Y2"/>
<dbReference type="BioGRID" id="63556">
    <property type="interactions" value="1"/>
</dbReference>
<dbReference type="FunCoup" id="Q9W0Y2">
    <property type="interactions" value="226"/>
</dbReference>
<dbReference type="STRING" id="7227.FBpp0072318"/>
<dbReference type="PaxDb" id="7227-FBpp0072318"/>
<dbReference type="DNASU" id="37988"/>
<dbReference type="EnsemblMetazoa" id="FBtr0072412">
    <property type="protein sequence ID" value="FBpp0072318"/>
    <property type="gene ID" value="FBgn0035082"/>
</dbReference>
<dbReference type="GeneID" id="37988"/>
<dbReference type="KEGG" id="dme:Dmel_CG2811"/>
<dbReference type="UCSC" id="CG2811-RA">
    <property type="organism name" value="d. melanogaster"/>
</dbReference>
<dbReference type="AGR" id="FB:FBgn0035082"/>
<dbReference type="FlyBase" id="FBgn0035082">
    <property type="gene designation" value="CG2811"/>
</dbReference>
<dbReference type="VEuPathDB" id="VectorBase:FBgn0035082"/>
<dbReference type="eggNOG" id="KOG4450">
    <property type="taxonomic scope" value="Eukaryota"/>
</dbReference>
<dbReference type="GeneTree" id="ENSGT00390000010543"/>
<dbReference type="HOGENOM" id="CLU_083466_1_0_1"/>
<dbReference type="InParanoid" id="Q9W0Y2"/>
<dbReference type="OMA" id="NEKLECW"/>
<dbReference type="OrthoDB" id="113620at2759"/>
<dbReference type="PhylomeDB" id="Q9W0Y2"/>
<dbReference type="BioGRID-ORCS" id="37988">
    <property type="hits" value="0 hits in 1 CRISPR screen"/>
</dbReference>
<dbReference type="GenomeRNAi" id="37988"/>
<dbReference type="PRO" id="PR:Q9W0Y2"/>
<dbReference type="Proteomes" id="UP000000803">
    <property type="component" value="Chromosome 2R"/>
</dbReference>
<dbReference type="Bgee" id="FBgn0035082">
    <property type="expression patterns" value="Expressed in adult enteroendocrine precursor cell in adult midgut (Drosophila) and 156 other cell types or tissues"/>
</dbReference>
<dbReference type="ExpressionAtlas" id="Q9W0Y2">
    <property type="expression patterns" value="baseline and differential"/>
</dbReference>
<dbReference type="GO" id="GO:0005829">
    <property type="term" value="C:cytosol"/>
    <property type="evidence" value="ECO:0000318"/>
    <property type="project" value="GO_Central"/>
</dbReference>
<dbReference type="GO" id="GO:0016746">
    <property type="term" value="F:acyltransferase activity"/>
    <property type="evidence" value="ECO:0007669"/>
    <property type="project" value="UniProtKB-KW"/>
</dbReference>
<dbReference type="GO" id="GO:0061929">
    <property type="term" value="F:gamma-glutamylaminecyclotransferase activity"/>
    <property type="evidence" value="ECO:0000250"/>
    <property type="project" value="FlyBase"/>
</dbReference>
<dbReference type="CDD" id="cd06661">
    <property type="entry name" value="GGCT_like"/>
    <property type="match status" value="1"/>
</dbReference>
<dbReference type="FunFam" id="3.10.490.10:FF:000018">
    <property type="entry name" value="Uncharacterized protein, isoform B"/>
    <property type="match status" value="1"/>
</dbReference>
<dbReference type="Gene3D" id="3.10.490.10">
    <property type="entry name" value="Gamma-glutamyl cyclotransferase-like"/>
    <property type="match status" value="1"/>
</dbReference>
<dbReference type="InterPro" id="IPR009288">
    <property type="entry name" value="AIG2-like_dom"/>
</dbReference>
<dbReference type="InterPro" id="IPR039126">
    <property type="entry name" value="GGACT"/>
</dbReference>
<dbReference type="InterPro" id="IPR013024">
    <property type="entry name" value="GGCT-like"/>
</dbReference>
<dbReference type="InterPro" id="IPR036568">
    <property type="entry name" value="GGCT-like_sf"/>
</dbReference>
<dbReference type="PANTHER" id="PTHR12510:SF4">
    <property type="entry name" value="GAMMA-GLUTAMYLAMINECYCLOTRANSFERASE"/>
    <property type="match status" value="1"/>
</dbReference>
<dbReference type="PANTHER" id="PTHR12510">
    <property type="entry name" value="TROPONIN C-AKIN-1 PROTEIN"/>
    <property type="match status" value="1"/>
</dbReference>
<dbReference type="Pfam" id="PF06094">
    <property type="entry name" value="GGACT"/>
    <property type="match status" value="1"/>
</dbReference>
<dbReference type="SUPFAM" id="SSF110857">
    <property type="entry name" value="Gamma-glutamyl cyclotransferase-like"/>
    <property type="match status" value="1"/>
</dbReference>
<feature type="chain" id="PRO_0000184785" description="Putative gamma-glutamylcyclotransferase CG2811">
    <location>
        <begin position="1"/>
        <end position="157"/>
    </location>
</feature>
<feature type="active site" description="Proton acceptor" evidence="1">
    <location>
        <position position="89"/>
    </location>
</feature>
<feature type="binding site" evidence="1">
    <location>
        <begin position="14"/>
        <end position="17"/>
    </location>
    <ligand>
        <name>substrate</name>
    </ligand>
</feature>
<accession>Q9W0Y2</accession>
<accession>Q8SYD3</accession>
<sequence length="157" mass="18505">MAEKLRMAARVFVYGTLKRGEPNHHWLTKKENGQARFLGRGKTETKFPLVVGTRYNIPFLLARPGEGNHIEGEVYEVDETMLSKLDILEDYPDYYDREQQTILMEQNETIQCWLYLIRNFPDKMLAKELLISYHNTPERPYNEKSVRTVSARDDLSY</sequence>
<reference key="1">
    <citation type="journal article" date="2000" name="Science">
        <title>The genome sequence of Drosophila melanogaster.</title>
        <authorList>
            <person name="Adams M.D."/>
            <person name="Celniker S.E."/>
            <person name="Holt R.A."/>
            <person name="Evans C.A."/>
            <person name="Gocayne J.D."/>
            <person name="Amanatides P.G."/>
            <person name="Scherer S.E."/>
            <person name="Li P.W."/>
            <person name="Hoskins R.A."/>
            <person name="Galle R.F."/>
            <person name="George R.A."/>
            <person name="Lewis S.E."/>
            <person name="Richards S."/>
            <person name="Ashburner M."/>
            <person name="Henderson S.N."/>
            <person name="Sutton G.G."/>
            <person name="Wortman J.R."/>
            <person name="Yandell M.D."/>
            <person name="Zhang Q."/>
            <person name="Chen L.X."/>
            <person name="Brandon R.C."/>
            <person name="Rogers Y.-H.C."/>
            <person name="Blazej R.G."/>
            <person name="Champe M."/>
            <person name="Pfeiffer B.D."/>
            <person name="Wan K.H."/>
            <person name="Doyle C."/>
            <person name="Baxter E.G."/>
            <person name="Helt G."/>
            <person name="Nelson C.R."/>
            <person name="Miklos G.L.G."/>
            <person name="Abril J.F."/>
            <person name="Agbayani A."/>
            <person name="An H.-J."/>
            <person name="Andrews-Pfannkoch C."/>
            <person name="Baldwin D."/>
            <person name="Ballew R.M."/>
            <person name="Basu A."/>
            <person name="Baxendale J."/>
            <person name="Bayraktaroglu L."/>
            <person name="Beasley E.M."/>
            <person name="Beeson K.Y."/>
            <person name="Benos P.V."/>
            <person name="Berman B.P."/>
            <person name="Bhandari D."/>
            <person name="Bolshakov S."/>
            <person name="Borkova D."/>
            <person name="Botchan M.R."/>
            <person name="Bouck J."/>
            <person name="Brokstein P."/>
            <person name="Brottier P."/>
            <person name="Burtis K.C."/>
            <person name="Busam D.A."/>
            <person name="Butler H."/>
            <person name="Cadieu E."/>
            <person name="Center A."/>
            <person name="Chandra I."/>
            <person name="Cherry J.M."/>
            <person name="Cawley S."/>
            <person name="Dahlke C."/>
            <person name="Davenport L.B."/>
            <person name="Davies P."/>
            <person name="de Pablos B."/>
            <person name="Delcher A."/>
            <person name="Deng Z."/>
            <person name="Mays A.D."/>
            <person name="Dew I."/>
            <person name="Dietz S.M."/>
            <person name="Dodson K."/>
            <person name="Doup L.E."/>
            <person name="Downes M."/>
            <person name="Dugan-Rocha S."/>
            <person name="Dunkov B.C."/>
            <person name="Dunn P."/>
            <person name="Durbin K.J."/>
            <person name="Evangelista C.C."/>
            <person name="Ferraz C."/>
            <person name="Ferriera S."/>
            <person name="Fleischmann W."/>
            <person name="Fosler C."/>
            <person name="Gabrielian A.E."/>
            <person name="Garg N.S."/>
            <person name="Gelbart W.M."/>
            <person name="Glasser K."/>
            <person name="Glodek A."/>
            <person name="Gong F."/>
            <person name="Gorrell J.H."/>
            <person name="Gu Z."/>
            <person name="Guan P."/>
            <person name="Harris M."/>
            <person name="Harris N.L."/>
            <person name="Harvey D.A."/>
            <person name="Heiman T.J."/>
            <person name="Hernandez J.R."/>
            <person name="Houck J."/>
            <person name="Hostin D."/>
            <person name="Houston K.A."/>
            <person name="Howland T.J."/>
            <person name="Wei M.-H."/>
            <person name="Ibegwam C."/>
            <person name="Jalali M."/>
            <person name="Kalush F."/>
            <person name="Karpen G.H."/>
            <person name="Ke Z."/>
            <person name="Kennison J.A."/>
            <person name="Ketchum K.A."/>
            <person name="Kimmel B.E."/>
            <person name="Kodira C.D."/>
            <person name="Kraft C.L."/>
            <person name="Kravitz S."/>
            <person name="Kulp D."/>
            <person name="Lai Z."/>
            <person name="Lasko P."/>
            <person name="Lei Y."/>
            <person name="Levitsky A.A."/>
            <person name="Li J.H."/>
            <person name="Li Z."/>
            <person name="Liang Y."/>
            <person name="Lin X."/>
            <person name="Liu X."/>
            <person name="Mattei B."/>
            <person name="McIntosh T.C."/>
            <person name="McLeod M.P."/>
            <person name="McPherson D."/>
            <person name="Merkulov G."/>
            <person name="Milshina N.V."/>
            <person name="Mobarry C."/>
            <person name="Morris J."/>
            <person name="Moshrefi A."/>
            <person name="Mount S.M."/>
            <person name="Moy M."/>
            <person name="Murphy B."/>
            <person name="Murphy L."/>
            <person name="Muzny D.M."/>
            <person name="Nelson D.L."/>
            <person name="Nelson D.R."/>
            <person name="Nelson K.A."/>
            <person name="Nixon K."/>
            <person name="Nusskern D.R."/>
            <person name="Pacleb J.M."/>
            <person name="Palazzolo M."/>
            <person name="Pittman G.S."/>
            <person name="Pan S."/>
            <person name="Pollard J."/>
            <person name="Puri V."/>
            <person name="Reese M.G."/>
            <person name="Reinert K."/>
            <person name="Remington K."/>
            <person name="Saunders R.D.C."/>
            <person name="Scheeler F."/>
            <person name="Shen H."/>
            <person name="Shue B.C."/>
            <person name="Siden-Kiamos I."/>
            <person name="Simpson M."/>
            <person name="Skupski M.P."/>
            <person name="Smith T.J."/>
            <person name="Spier E."/>
            <person name="Spradling A.C."/>
            <person name="Stapleton M."/>
            <person name="Strong R."/>
            <person name="Sun E."/>
            <person name="Svirskas R."/>
            <person name="Tector C."/>
            <person name="Turner R."/>
            <person name="Venter E."/>
            <person name="Wang A.H."/>
            <person name="Wang X."/>
            <person name="Wang Z.-Y."/>
            <person name="Wassarman D.A."/>
            <person name="Weinstock G.M."/>
            <person name="Weissenbach J."/>
            <person name="Williams S.M."/>
            <person name="Woodage T."/>
            <person name="Worley K.C."/>
            <person name="Wu D."/>
            <person name="Yang S."/>
            <person name="Yao Q.A."/>
            <person name="Ye J."/>
            <person name="Yeh R.-F."/>
            <person name="Zaveri J.S."/>
            <person name="Zhan M."/>
            <person name="Zhang G."/>
            <person name="Zhao Q."/>
            <person name="Zheng L."/>
            <person name="Zheng X.H."/>
            <person name="Zhong F.N."/>
            <person name="Zhong W."/>
            <person name="Zhou X."/>
            <person name="Zhu S.C."/>
            <person name="Zhu X."/>
            <person name="Smith H.O."/>
            <person name="Gibbs R.A."/>
            <person name="Myers E.W."/>
            <person name="Rubin G.M."/>
            <person name="Venter J.C."/>
        </authorList>
    </citation>
    <scope>NUCLEOTIDE SEQUENCE [LARGE SCALE GENOMIC DNA]</scope>
    <source>
        <strain>Berkeley</strain>
    </source>
</reference>
<reference key="2">
    <citation type="journal article" date="2002" name="Genome Biol.">
        <title>Annotation of the Drosophila melanogaster euchromatic genome: a systematic review.</title>
        <authorList>
            <person name="Misra S."/>
            <person name="Crosby M.A."/>
            <person name="Mungall C.J."/>
            <person name="Matthews B.B."/>
            <person name="Campbell K.S."/>
            <person name="Hradecky P."/>
            <person name="Huang Y."/>
            <person name="Kaminker J.S."/>
            <person name="Millburn G.H."/>
            <person name="Prochnik S.E."/>
            <person name="Smith C.D."/>
            <person name="Tupy J.L."/>
            <person name="Whitfield E.J."/>
            <person name="Bayraktaroglu L."/>
            <person name="Berman B.P."/>
            <person name="Bettencourt B.R."/>
            <person name="Celniker S.E."/>
            <person name="de Grey A.D.N.J."/>
            <person name="Drysdale R.A."/>
            <person name="Harris N.L."/>
            <person name="Richter J."/>
            <person name="Russo S."/>
            <person name="Schroeder A.J."/>
            <person name="Shu S.Q."/>
            <person name="Stapleton M."/>
            <person name="Yamada C."/>
            <person name="Ashburner M."/>
            <person name="Gelbart W.M."/>
            <person name="Rubin G.M."/>
            <person name="Lewis S.E."/>
        </authorList>
    </citation>
    <scope>GENOME REANNOTATION</scope>
    <source>
        <strain>Berkeley</strain>
    </source>
</reference>
<reference key="3">
    <citation type="journal article" date="2002" name="Genome Biol.">
        <title>A Drosophila full-length cDNA resource.</title>
        <authorList>
            <person name="Stapleton M."/>
            <person name="Carlson J.W."/>
            <person name="Brokstein P."/>
            <person name="Yu C."/>
            <person name="Champe M."/>
            <person name="George R.A."/>
            <person name="Guarin H."/>
            <person name="Kronmiller B."/>
            <person name="Pacleb J.M."/>
            <person name="Park S."/>
            <person name="Wan K.H."/>
            <person name="Rubin G.M."/>
            <person name="Celniker S.E."/>
        </authorList>
    </citation>
    <scope>NUCLEOTIDE SEQUENCE [LARGE SCALE MRNA]</scope>
    <source>
        <strain>Berkeley</strain>
        <tissue>Embryo</tissue>
    </source>
</reference>
<evidence type="ECO:0000250" key="1"/>
<evidence type="ECO:0000305" key="2"/>
<organism>
    <name type="scientific">Drosophila melanogaster</name>
    <name type="common">Fruit fly</name>
    <dbReference type="NCBI Taxonomy" id="7227"/>
    <lineage>
        <taxon>Eukaryota</taxon>
        <taxon>Metazoa</taxon>
        <taxon>Ecdysozoa</taxon>
        <taxon>Arthropoda</taxon>
        <taxon>Hexapoda</taxon>
        <taxon>Insecta</taxon>
        <taxon>Pterygota</taxon>
        <taxon>Neoptera</taxon>
        <taxon>Endopterygota</taxon>
        <taxon>Diptera</taxon>
        <taxon>Brachycera</taxon>
        <taxon>Muscomorpha</taxon>
        <taxon>Ephydroidea</taxon>
        <taxon>Drosophilidae</taxon>
        <taxon>Drosophila</taxon>
        <taxon>Sophophora</taxon>
    </lineage>
</organism>
<protein>
    <recommendedName>
        <fullName>Putative gamma-glutamylcyclotransferase CG2811</fullName>
        <ecNumber>2.3.2.-</ecNumber>
    </recommendedName>
</protein>
<comment type="function">
    <text evidence="1">Putative gamma-glutamylcyclotransferase.</text>
</comment>
<comment type="similarity">
    <text evidence="2">Belongs to the gamma-glutamylcyclotransferase family.</text>
</comment>
<keyword id="KW-0012">Acyltransferase</keyword>
<keyword id="KW-1185">Reference proteome</keyword>
<keyword id="KW-0808">Transferase</keyword>